<reference key="1">
    <citation type="journal article" date="1990" name="Plant Physiol.">
        <title>Molecular cloning and characterization of cold regulated genes in barley.</title>
        <authorList>
            <person name="Cattivelli L."/>
            <person name="Bartels D."/>
        </authorList>
    </citation>
    <scope>NUCLEOTIDE SEQUENCE [MRNA]</scope>
    <source>
        <strain>cv. Georgie</strain>
    </source>
</reference>
<reference key="2">
    <citation type="submission" date="1998-02" db="EMBL/GenBank/DDBJ databases">
        <authorList>
            <person name="Cattivelli L."/>
            <person name="Bartels D."/>
        </authorList>
    </citation>
    <scope>SEQUENCE REVISION TO C-TERMINUS</scope>
</reference>
<proteinExistence type="evidence at transcript level"/>
<feature type="chain" id="PRO_0000079323" description="Cold-regulated protein 1">
    <location>
        <begin position="1" status="less than"/>
        <end position="127"/>
    </location>
</feature>
<feature type="region of interest" description="Disordered" evidence="1">
    <location>
        <begin position="39"/>
        <end position="127"/>
    </location>
</feature>
<feature type="compositionally biased region" description="Basic residues" evidence="1">
    <location>
        <begin position="85"/>
        <end position="101"/>
    </location>
</feature>
<feature type="compositionally biased region" description="Low complexity" evidence="1">
    <location>
        <begin position="102"/>
        <end position="121"/>
    </location>
</feature>
<feature type="non-terminal residue">
    <location>
        <position position="1"/>
    </location>
</feature>
<protein>
    <recommendedName>
        <fullName>Cold-regulated protein 1</fullName>
    </recommendedName>
</protein>
<comment type="miscellaneous">
    <text>Contains several arginine residues in close proximity which may be involved in protein RNA interactions.</text>
</comment>
<organism>
    <name type="scientific">Hordeum vulgare</name>
    <name type="common">Barley</name>
    <dbReference type="NCBI Taxonomy" id="4513"/>
    <lineage>
        <taxon>Eukaryota</taxon>
        <taxon>Viridiplantae</taxon>
        <taxon>Streptophyta</taxon>
        <taxon>Embryophyta</taxon>
        <taxon>Tracheophyta</taxon>
        <taxon>Spermatophyta</taxon>
        <taxon>Magnoliopsida</taxon>
        <taxon>Liliopsida</taxon>
        <taxon>Poales</taxon>
        <taxon>Poaceae</taxon>
        <taxon>BOP clade</taxon>
        <taxon>Pooideae</taxon>
        <taxon>Triticodae</taxon>
        <taxon>Triticeae</taxon>
        <taxon>Hordeinae</taxon>
        <taxon>Hordeum</taxon>
    </lineage>
</organism>
<evidence type="ECO:0000256" key="1">
    <source>
        <dbReference type="SAM" id="MobiDB-lite"/>
    </source>
</evidence>
<accession>P23251</accession>
<name>CR1_HORVU</name>
<dbReference type="EMBL" id="M60732">
    <property type="protein sequence ID" value="AAC03408.1"/>
    <property type="molecule type" value="mRNA"/>
</dbReference>
<dbReference type="PIR" id="A45512">
    <property type="entry name" value="A45512"/>
</dbReference>
<dbReference type="PIR" id="T05261">
    <property type="entry name" value="T05261"/>
</dbReference>
<sequence>CKVAHTYIHRRQTTDRFSSLHRPPDPDRWLLLPCCSEEARGPPPSPAPLPARLFPGRASSPLARTPSAGAASACKPLLERLPTPSRRRRRRRATRRARSRMPRTTPWRAPRAPARAWWTRPRMARAR</sequence>